<gene>
    <name evidence="1" type="primary">FADS1</name>
</gene>
<proteinExistence type="evidence at protein level"/>
<reference key="1">
    <citation type="journal article" date="2012" name="J. Lipid Res.">
        <title>A novel FADS1 isoform potentiates FADS2-mediated production of eicosanoid precursor fatty acids.</title>
        <authorList>
            <person name="Park W.J."/>
            <person name="Kothapalli K.S."/>
            <person name="Reardon H.T."/>
            <person name="Lawrence P."/>
            <person name="Qian S.B."/>
            <person name="Brenna J.T."/>
        </authorList>
    </citation>
    <scope>NUCLEOTIDE SEQUENCE [MRNA] (ISOFORMS 1 AND 2)</scope>
    <scope>FUNCTION</scope>
    <scope>SUBCELLULAR LOCATION</scope>
    <scope>TISSUE SPECIFICITY</scope>
    <scope>CATALYTIC ACTIVITY</scope>
</reference>
<comment type="function">
    <molecule>Isoform 1</molecule>
    <text evidence="2 3 9">Acts as a front-end fatty acyl-coenzyme A (CoA) desaturase that introduces a cis double bond at carbon 5 located between a preexisting double bond and the carboxyl end of the fatty acyl chain. Involved in biosynthesis of highly unsaturated fatty acids (HUFA) from the essential polyunsaturated fatty acids (PUFA) linoleic acid (LA) (18:2n-6) and alpha-linolenic acid (ALA) (18:3n-3) precursors. Specifically, desaturates dihomo-gamma-linoleoate (DGLA) (20:3n-6) and eicosatetraenoate (ETA) (20:4n-3) to generate arachidonate (AA) (20:4n-6) and eicosapentaenoate (EPA) (20:5n-3), respectively (Probable). As a rate limiting enzyme for DGLA (20:3n-6) and AA (20:4n-6)-derived eicosanoid biosynthesis, controls the metabolism of inflammatory lipids like prostaglandin E2, critical for efficient acute inflammatory response and maintenance of epithelium homeostasis. Contributes to membrane phospholipid biosynthesis by providing AA (20:4n-6) as a major acyl chain esterified into phospholipids. In particular, regulates phosphatidylinositol-4,5-bisphosphate levels, modulating inflammatory cytokine production in T-cells (By similarity). Also desaturates (11E)-octadecenoate (trans-vaccenoate)(18:1n-9), a metabolite in the biohydrogenation pathway of LA (18:2n-6) (By similarity).</text>
</comment>
<comment type="function">
    <molecule>Isoform 2</molecule>
    <text evidence="6">Does not exhibit any catalytic activity toward 20:3n-6, but it may enhance FADS2 activity.</text>
</comment>
<comment type="catalytic activity">
    <reaction evidence="6">
        <text>(8Z,11Z,14Z)-eicosatrienoyl-CoA + 2 Fe(II)-[cytochrome b5] + O2 + 2 H(+) = (5Z,8Z,11Z,14Z)-eicosatetraenoyl-CoA + 2 Fe(III)-[cytochrome b5] + 2 H2O</text>
        <dbReference type="Rhea" id="RHEA:46424"/>
        <dbReference type="Rhea" id="RHEA-COMP:10438"/>
        <dbReference type="Rhea" id="RHEA-COMP:10439"/>
        <dbReference type="ChEBI" id="CHEBI:15377"/>
        <dbReference type="ChEBI" id="CHEBI:15378"/>
        <dbReference type="ChEBI" id="CHEBI:15379"/>
        <dbReference type="ChEBI" id="CHEBI:29033"/>
        <dbReference type="ChEBI" id="CHEBI:29034"/>
        <dbReference type="ChEBI" id="CHEBI:57368"/>
        <dbReference type="ChEBI" id="CHEBI:74264"/>
        <dbReference type="EC" id="1.14.19.44"/>
    </reaction>
    <physiologicalReaction direction="left-to-right" evidence="9">
        <dbReference type="Rhea" id="RHEA:46425"/>
    </physiologicalReaction>
</comment>
<comment type="catalytic activity">
    <reaction evidence="1 9">
        <text>(8Z,11Z,14Z,17Z)-eicosatetraenoyl-CoA + 2 Fe(II)-[cytochrome b5] + O2 + 2 H(+) = (5Z,8Z,11Z,14Z,17Z)-eicosapentaenoyl-CoA + 2 Fe(III)-[cytochrome b5] + 2 H2O</text>
        <dbReference type="Rhea" id="RHEA:46420"/>
        <dbReference type="Rhea" id="RHEA-COMP:10438"/>
        <dbReference type="Rhea" id="RHEA-COMP:10439"/>
        <dbReference type="ChEBI" id="CHEBI:15377"/>
        <dbReference type="ChEBI" id="CHEBI:15378"/>
        <dbReference type="ChEBI" id="CHEBI:15379"/>
        <dbReference type="ChEBI" id="CHEBI:29033"/>
        <dbReference type="ChEBI" id="CHEBI:29034"/>
        <dbReference type="ChEBI" id="CHEBI:73862"/>
        <dbReference type="ChEBI" id="CHEBI:74265"/>
        <dbReference type="EC" id="1.14.19.44"/>
    </reaction>
    <physiologicalReaction direction="left-to-right" evidence="9">
        <dbReference type="Rhea" id="RHEA:46421"/>
    </physiologicalReaction>
</comment>
<comment type="catalytic activity">
    <reaction evidence="3">
        <text>(11E)-octadecenoyl-CoA + 2 Fe(II)-[cytochrome b5] + O2 + 2 H(+) = (5Z,11E)-octadecadienoyl-CoA + 2 Fe(III)-[cytochrome b5] + 2 H2O</text>
        <dbReference type="Rhea" id="RHEA:46060"/>
        <dbReference type="Rhea" id="RHEA-COMP:10438"/>
        <dbReference type="Rhea" id="RHEA-COMP:10439"/>
        <dbReference type="ChEBI" id="CHEBI:15377"/>
        <dbReference type="ChEBI" id="CHEBI:15378"/>
        <dbReference type="ChEBI" id="CHEBI:15379"/>
        <dbReference type="ChEBI" id="CHEBI:29033"/>
        <dbReference type="ChEBI" id="CHEBI:29034"/>
        <dbReference type="ChEBI" id="CHEBI:74296"/>
        <dbReference type="ChEBI" id="CHEBI:85651"/>
    </reaction>
    <physiologicalReaction direction="left-to-right" evidence="3">
        <dbReference type="Rhea" id="RHEA:46061"/>
    </physiologicalReaction>
</comment>
<comment type="pathway">
    <text>Lipid metabolism; polyunsaturated fatty acid biosynthesis.</text>
</comment>
<comment type="subcellular location">
    <molecule>Isoform 1</molecule>
    <subcellularLocation>
        <location evidence="6">Endoplasmic reticulum membrane</location>
        <topology evidence="6">Multi-pass membrane protein</topology>
    </subcellularLocation>
    <subcellularLocation>
        <location evidence="6">Mitochondrion</location>
    </subcellularLocation>
</comment>
<comment type="subcellular location">
    <molecule>Isoform 2</molecule>
    <subcellularLocation>
        <location evidence="6">Endoplasmic reticulum membrane</location>
        <topology evidence="6">Multi-pass membrane protein</topology>
    </subcellularLocation>
</comment>
<comment type="alternative products">
    <event type="alternative splicing"/>
    <isoform>
        <id>A4UVI1-1</id>
        <name>1</name>
        <name>FADS1CS</name>
        <sequence type="displayed"/>
    </isoform>
    <isoform>
        <id>A4UVI1-2</id>
        <name>2</name>
        <name>FADS1AT1</name>
        <sequence type="described" ref="VSP_053444"/>
    </isoform>
</comment>
<comment type="tissue specificity">
    <text evidence="6">Widely expressed. Expressed in brain, liver and thymus (at protein level). Isoform 1 seems to be more abundant than isoform 2. Expression of isoform 2 is very low in spleen and not detectable in skeletal muscle.</text>
</comment>
<comment type="domain">
    <text>The histidine box domains may contain the active site and/or be involved in metal ion binding.</text>
</comment>
<comment type="similarity">
    <text evidence="8">Belongs to the fatty acid desaturase type 1 family.</text>
</comment>
<feature type="chain" id="PRO_0000307098" description="Acyl-CoA (8-3)-desaturase">
    <location>
        <begin position="1"/>
        <end position="444"/>
    </location>
</feature>
<feature type="topological domain" description="Cytoplasmic" evidence="4">
    <location>
        <begin position="1"/>
        <end position="121"/>
    </location>
</feature>
<feature type="transmembrane region" description="Helical" evidence="4">
    <location>
        <begin position="122"/>
        <end position="142"/>
    </location>
</feature>
<feature type="topological domain" description="Lumenal" evidence="4">
    <location>
        <begin position="143"/>
        <end position="146"/>
    </location>
</feature>
<feature type="transmembrane region" description="Helical" evidence="4">
    <location>
        <begin position="147"/>
        <end position="167"/>
    </location>
</feature>
<feature type="topological domain" description="Cytoplasmic" evidence="4">
    <location>
        <begin position="168"/>
        <end position="267"/>
    </location>
</feature>
<feature type="transmembrane region" description="Helical" evidence="4">
    <location>
        <begin position="268"/>
        <end position="288"/>
    </location>
</feature>
<feature type="topological domain" description="Lumenal" evidence="4">
    <location>
        <begin position="289"/>
        <end position="305"/>
    </location>
</feature>
<feature type="transmembrane region" description="Helical" evidence="4">
    <location>
        <begin position="306"/>
        <end position="326"/>
    </location>
</feature>
<feature type="topological domain" description="Cytoplasmic" evidence="4">
    <location>
        <begin position="327"/>
        <end position="444"/>
    </location>
</feature>
<feature type="domain" description="Cytochrome b5 heme-binding" evidence="5">
    <location>
        <begin position="17"/>
        <end position="94"/>
    </location>
</feature>
<feature type="short sequence motif" description="Histidine box-1">
    <location>
        <begin position="179"/>
        <end position="183"/>
    </location>
</feature>
<feature type="short sequence motif" description="Histidine box-2">
    <location>
        <begin position="216"/>
        <end position="220"/>
    </location>
</feature>
<feature type="short sequence motif" description="Histidine box-3">
    <location>
        <begin position="382"/>
        <end position="386"/>
    </location>
</feature>
<feature type="modified residue" description="N-acetylmethionine" evidence="1">
    <location>
        <position position="1"/>
    </location>
</feature>
<feature type="splice variant" id="VSP_053444" description="In isoform 2." evidence="7">
    <location>
        <begin position="1"/>
        <end position="84"/>
    </location>
</feature>
<feature type="sequence conflict" description="In Ref. 1; AFC78250." evidence="8" ref="1">
    <original>D</original>
    <variation>N</variation>
    <location>
        <position position="425"/>
    </location>
</feature>
<sequence>MAPDPVAAKTPVQGPTPRYFTWDEVAQRSGCEERWLVIDRKVYDISEFTRRHPGGSRVISHYAGQDATDPFVAFHSNKGLVKKYMNSLLIGELSPEQPSFEPTKNKELTDEFRELRATVEQMGLMKANHVFFLLYLLHILLLDGAAWLTLWIFGTSFLPFLLCAVLLTAAQIQAGWLQHDLGHLSVFSTSKWNHLVHHFVIGHLKGVPASWWNHMHFQHHAKPNCFGKDPDINMHPFFFALGKILSVELGKQKKKYMPYNHQHKYFFLIGPPALVPFFFQWYVFYFVIQRKKWVDLAWMITFYIRLLLTYVPLLGLKAFLGLYFIVRFLESNWFVWVTQMNHIPMHIDHDRNMDWVSTQLQATCNVHKSAFNDWFSGHLNFQIEHHLFPMMPRHNYHKVAPLVQSLCAKHGIEYQSKPLLSAFADIIHSLKESGQLWLDAYLHQ</sequence>
<accession>A4UVI1</accession>
<accession>F1CNE5</accession>
<accession>L7NWK4</accession>
<accession>L7NWR0</accession>
<accession>Q0PR60</accession>
<organism>
    <name type="scientific">Papio anubis</name>
    <name type="common">Olive baboon</name>
    <dbReference type="NCBI Taxonomy" id="9555"/>
    <lineage>
        <taxon>Eukaryota</taxon>
        <taxon>Metazoa</taxon>
        <taxon>Chordata</taxon>
        <taxon>Craniata</taxon>
        <taxon>Vertebrata</taxon>
        <taxon>Euteleostomi</taxon>
        <taxon>Mammalia</taxon>
        <taxon>Eutheria</taxon>
        <taxon>Euarchontoglires</taxon>
        <taxon>Primates</taxon>
        <taxon>Haplorrhini</taxon>
        <taxon>Catarrhini</taxon>
        <taxon>Cercopithecidae</taxon>
        <taxon>Cercopithecinae</taxon>
        <taxon>Papio</taxon>
    </lineage>
</organism>
<evidence type="ECO:0000250" key="1">
    <source>
        <dbReference type="UniProtKB" id="O60427"/>
    </source>
</evidence>
<evidence type="ECO:0000250" key="2">
    <source>
        <dbReference type="UniProtKB" id="Q920L1"/>
    </source>
</evidence>
<evidence type="ECO:0000250" key="3">
    <source>
        <dbReference type="UniProtKB" id="Q920R3"/>
    </source>
</evidence>
<evidence type="ECO:0000255" key="4"/>
<evidence type="ECO:0000255" key="5">
    <source>
        <dbReference type="PROSITE-ProRule" id="PRU00279"/>
    </source>
</evidence>
<evidence type="ECO:0000269" key="6">
    <source>
    </source>
</evidence>
<evidence type="ECO:0000303" key="7">
    <source>
    </source>
</evidence>
<evidence type="ECO:0000305" key="8"/>
<evidence type="ECO:0000305" key="9">
    <source>
    </source>
</evidence>
<keyword id="KW-0007">Acetylation</keyword>
<keyword id="KW-0025">Alternative splicing</keyword>
<keyword id="KW-0249">Electron transport</keyword>
<keyword id="KW-0256">Endoplasmic reticulum</keyword>
<keyword id="KW-0275">Fatty acid biosynthesis</keyword>
<keyword id="KW-0276">Fatty acid metabolism</keyword>
<keyword id="KW-0444">Lipid biosynthesis</keyword>
<keyword id="KW-0443">Lipid metabolism</keyword>
<keyword id="KW-0472">Membrane</keyword>
<keyword id="KW-0496">Mitochondrion</keyword>
<keyword id="KW-0560">Oxidoreductase</keyword>
<keyword id="KW-1185">Reference proteome</keyword>
<keyword id="KW-0812">Transmembrane</keyword>
<keyword id="KW-1133">Transmembrane helix</keyword>
<keyword id="KW-0813">Transport</keyword>
<name>FADS1_PAPAN</name>
<protein>
    <recommendedName>
        <fullName evidence="8">Acyl-CoA (8-3)-desaturase</fullName>
        <ecNumber evidence="6">1.14.19.44</ecNumber>
    </recommendedName>
    <alternativeName>
        <fullName>Delta(5) fatty acid desaturase</fullName>
        <shortName evidence="2">D5D</shortName>
        <shortName evidence="2">Delta(5) desaturase</shortName>
        <shortName evidence="1">Delta-5 desaturase</shortName>
    </alternativeName>
    <alternativeName>
        <fullName evidence="1">Fatty acid desaturase 1</fullName>
    </alternativeName>
</protein>
<dbReference type="EC" id="1.14.19.44" evidence="6"/>
<dbReference type="EMBL" id="DQ779578">
    <property type="protein sequence ID" value="ABG77281.1"/>
    <property type="molecule type" value="mRNA"/>
</dbReference>
<dbReference type="EMBL" id="EF531577">
    <property type="protein sequence ID" value="ABP06289.1"/>
    <property type="molecule type" value="mRNA"/>
</dbReference>
<dbReference type="EMBL" id="HQ440212">
    <property type="protein sequence ID" value="ADQ89961.1"/>
    <property type="molecule type" value="mRNA"/>
</dbReference>
<dbReference type="EMBL" id="JF518968">
    <property type="protein sequence ID" value="AFC78250.1"/>
    <property type="molecule type" value="mRNA"/>
</dbReference>
<dbReference type="EMBL" id="JF518969">
    <property type="protein sequence ID" value="AFC78251.1"/>
    <property type="molecule type" value="mRNA"/>
</dbReference>
<dbReference type="EMBL" id="JF518970">
    <property type="protein sequence ID" value="AFC78252.1"/>
    <property type="molecule type" value="mRNA"/>
</dbReference>
<dbReference type="EMBL" id="JF518971">
    <property type="protein sequence ID" value="AFC78253.1"/>
    <property type="molecule type" value="mRNA"/>
</dbReference>
<dbReference type="EMBL" id="JF518972">
    <property type="protein sequence ID" value="AFC78254.1"/>
    <property type="molecule type" value="mRNA"/>
</dbReference>
<dbReference type="EMBL" id="JF518974">
    <property type="protein sequence ID" value="AFC78256.1"/>
    <property type="molecule type" value="mRNA"/>
</dbReference>
<dbReference type="RefSeq" id="NP_001106097.1">
    <molecule id="A4UVI1-1"/>
    <property type="nucleotide sequence ID" value="NM_001112627.1"/>
</dbReference>
<dbReference type="RefSeq" id="XP_031508585.1">
    <molecule id="A4UVI1-2"/>
    <property type="nucleotide sequence ID" value="XM_031652725.1"/>
</dbReference>
<dbReference type="SMR" id="A4UVI1"/>
<dbReference type="STRING" id="9555.ENSPANP00000024860"/>
<dbReference type="GeneID" id="100126707"/>
<dbReference type="KEGG" id="panu:100126707"/>
<dbReference type="CTD" id="3992"/>
<dbReference type="eggNOG" id="KOG4232">
    <property type="taxonomic scope" value="Eukaryota"/>
</dbReference>
<dbReference type="OrthoDB" id="6352at314294"/>
<dbReference type="UniPathway" id="UPA00658"/>
<dbReference type="Proteomes" id="UP000028761">
    <property type="component" value="Unplaced"/>
</dbReference>
<dbReference type="GO" id="GO:0005789">
    <property type="term" value="C:endoplasmic reticulum membrane"/>
    <property type="evidence" value="ECO:0000314"/>
    <property type="project" value="UniProtKB"/>
</dbReference>
<dbReference type="GO" id="GO:0005739">
    <property type="term" value="C:mitochondrion"/>
    <property type="evidence" value="ECO:0000314"/>
    <property type="project" value="UniProtKB"/>
</dbReference>
<dbReference type="GO" id="GO:0062076">
    <property type="term" value="F:acyl-CoA (8-3)-desaturase activity"/>
    <property type="evidence" value="ECO:0000314"/>
    <property type="project" value="UniProtKB"/>
</dbReference>
<dbReference type="GO" id="GO:0006636">
    <property type="term" value="P:unsaturated fatty acid biosynthetic process"/>
    <property type="evidence" value="ECO:0007669"/>
    <property type="project" value="UniProtKB-UniPathway"/>
</dbReference>
<dbReference type="CDD" id="cd03506">
    <property type="entry name" value="Delta6-FADS-like"/>
    <property type="match status" value="1"/>
</dbReference>
<dbReference type="FunFam" id="3.10.120.10:FF:000017">
    <property type="entry name" value="Fatty acid desaturase 1"/>
    <property type="match status" value="1"/>
</dbReference>
<dbReference type="Gene3D" id="3.10.120.10">
    <property type="entry name" value="Cytochrome b5-like heme/steroid binding domain"/>
    <property type="match status" value="1"/>
</dbReference>
<dbReference type="InterPro" id="IPR001199">
    <property type="entry name" value="Cyt_B5-like_heme/steroid-bd"/>
</dbReference>
<dbReference type="InterPro" id="IPR036400">
    <property type="entry name" value="Cyt_B5-like_heme/steroid_sf"/>
</dbReference>
<dbReference type="InterPro" id="IPR005804">
    <property type="entry name" value="FA_desaturase_dom"/>
</dbReference>
<dbReference type="InterPro" id="IPR012171">
    <property type="entry name" value="Fatty_acid_desaturase"/>
</dbReference>
<dbReference type="PANTHER" id="PTHR19353:SF57">
    <property type="entry name" value="ACYL-COA (8-3)-DESATURASE"/>
    <property type="match status" value="1"/>
</dbReference>
<dbReference type="PANTHER" id="PTHR19353">
    <property type="entry name" value="FATTY ACID DESATURASE 2"/>
    <property type="match status" value="1"/>
</dbReference>
<dbReference type="Pfam" id="PF00173">
    <property type="entry name" value="Cyt-b5"/>
    <property type="match status" value="1"/>
</dbReference>
<dbReference type="Pfam" id="PF00487">
    <property type="entry name" value="FA_desaturase"/>
    <property type="match status" value="1"/>
</dbReference>
<dbReference type="PIRSF" id="PIRSF015921">
    <property type="entry name" value="FA_sphinglp_des"/>
    <property type="match status" value="1"/>
</dbReference>
<dbReference type="PRINTS" id="PR00363">
    <property type="entry name" value="CYTOCHROMEB5"/>
</dbReference>
<dbReference type="SMART" id="SM01117">
    <property type="entry name" value="Cyt-b5"/>
    <property type="match status" value="1"/>
</dbReference>
<dbReference type="SUPFAM" id="SSF55856">
    <property type="entry name" value="Cytochrome b5-like heme/steroid binding domain"/>
    <property type="match status" value="1"/>
</dbReference>
<dbReference type="PROSITE" id="PS50255">
    <property type="entry name" value="CYTOCHROME_B5_2"/>
    <property type="match status" value="1"/>
</dbReference>